<comment type="function">
    <text evidence="5 6 7">Lytic polysaccharide monooxygenase (LPMO) that depolymerizes crystalline and amorphous polysaccharides via the oxidation of scissile alpha- or beta-(1-4)-glycosidic bonds, yielding C1 oxidation products (PubMed:27588039, PubMed:28491137, PubMed:29196788). Catalysis by LPMOs requires the reduction of the active-site copper from Cu(II) to Cu(I) by a reducing agent and H(2)O(2) or O(2) as a cosubstrate (PubMed:27588039, PubMed:29196788). Is active on regenerated amorphous cellulose (RAC) (PubMed:27588039).</text>
</comment>
<comment type="catalytic activity">
    <reaction evidence="5 6 7">
        <text>[(1-&gt;4)-beta-D-glucosyl]n+m + reduced acceptor + O2 = 4-dehydro-beta-D-glucosyl-[(1-&gt;4)-beta-D-glucosyl]n-1 + [(1-&gt;4)-beta-D-glucosyl]m + acceptor + H2O.</text>
        <dbReference type="EC" id="1.14.99.56"/>
    </reaction>
</comment>
<comment type="cofactor">
    <cofactor evidence="10">
        <name>Cu(2+)</name>
        <dbReference type="ChEBI" id="CHEBI:29036"/>
    </cofactor>
    <text evidence="10">Binds 1 copper ion per subunit.</text>
</comment>
<comment type="activity regulation">
    <text evidence="5">Is able to utilize various natural phenolic compounds as reducing agents. Most of these reducing agents are present in plants, either free or as lignin building blocks, such as sinapic acid, or as flavonoids such as catechin and dopamine (PubMed:27588039). Phenolic compounds with 1,2-benzenediol and 1,2,3-benzenetriol moieties yield the highest release of oxidized and non-oxidized glucooligosaccharides from cellulose compared to monophenols or sulfur-containing compounds (PubMed:27588039).</text>
</comment>
<comment type="biophysicochemical properties">
    <temperatureDependence>
        <text evidence="7">Optimum temperature is 40 degrees Celsius in the presence of ascorbic acid, while most C1-oxidized gluco-oligosaccharides are released between 50 and 60 degrees Celsius in the presence of 3-methylcatechol.</text>
    </temperatureDependence>
</comment>
<comment type="subcellular location">
    <subcellularLocation>
        <location evidence="10">Secreted</location>
    </subcellularLocation>
</comment>
<comment type="domain">
    <text evidence="5">Has a modular structure: an endo-beta-1,4-glucanase catalytic module at the N-terminus, a linker rich in serines and threonines, and a C-terminal carbohydrate-binding module (CBM). The genes for catalytic modules and CBMs seem to have evolved separately and have been linked by gene fusion.</text>
</comment>
<comment type="biotechnology">
    <text evidence="6">Lignocellulose is the most abundant polymeric composite on Earth and is a recalcitrant but promising renewable substrate for industrial biotechnology applications. Together with cellobiose dehydrogenases (CDHs) an enzymatic system capable of oxidative cellulose cleavage is formed, which increases the efficiency of cellulases and put LPMOs at focus of biofuel research (PubMed:28491137). Concerted enzymatic process involving the initial conversion of monophenols into diphenols by the polyphenol oxidase PPO7 leads to up to 75-fold improvement in LPMO9B-driven cellulose degradation (PubMed:28491137).</text>
</comment>
<comment type="similarity">
    <text evidence="9">Belongs to the polysaccharide monooxygenase AA9 family.</text>
</comment>
<proteinExistence type="evidence at protein level"/>
<feature type="signal peptide" evidence="3">
    <location>
        <begin position="1"/>
        <end position="18"/>
    </location>
</feature>
<feature type="chain" id="PRO_5003436161" description="AA9 family lytic polysaccharide monooxygenase B" evidence="3">
    <location>
        <begin position="19"/>
        <end position="323"/>
    </location>
</feature>
<feature type="domain" description="CBM1" evidence="4">
    <location>
        <begin position="286"/>
        <end position="323"/>
    </location>
</feature>
<feature type="binding site" evidence="1">
    <location>
        <position position="19"/>
    </location>
    <ligand>
        <name>Cu(2+)</name>
        <dbReference type="ChEBI" id="CHEBI:29036"/>
        <note>catalytic</note>
    </ligand>
</feature>
<feature type="binding site" evidence="1">
    <location>
        <position position="97"/>
    </location>
    <ligand>
        <name>Cu(2+)</name>
        <dbReference type="ChEBI" id="CHEBI:29036"/>
        <note>catalytic</note>
    </ligand>
</feature>
<feature type="binding site" evidence="1">
    <location>
        <position position="177"/>
    </location>
    <ligand>
        <name>O2</name>
        <dbReference type="ChEBI" id="CHEBI:15379"/>
    </ligand>
</feature>
<feature type="binding site" evidence="1">
    <location>
        <position position="186"/>
    </location>
    <ligand>
        <name>O2</name>
        <dbReference type="ChEBI" id="CHEBI:15379"/>
    </ligand>
</feature>
<feature type="binding site" evidence="1">
    <location>
        <position position="188"/>
    </location>
    <ligand>
        <name>Cu(2+)</name>
        <dbReference type="ChEBI" id="CHEBI:29036"/>
        <note>catalytic</note>
    </ligand>
</feature>
<feature type="disulfide bond" evidence="2">
    <location>
        <begin position="56"/>
        <end position="191"/>
    </location>
</feature>
<name>LP9B_THET4</name>
<keyword id="KW-0119">Carbohydrate metabolism</keyword>
<keyword id="KW-0136">Cellulose degradation</keyword>
<keyword id="KW-0186">Copper</keyword>
<keyword id="KW-1015">Disulfide bond</keyword>
<keyword id="KW-0479">Metal-binding</keyword>
<keyword id="KW-0503">Monooxygenase</keyword>
<keyword id="KW-0560">Oxidoreductase</keyword>
<keyword id="KW-0624">Polysaccharide degradation</keyword>
<keyword id="KW-1185">Reference proteome</keyword>
<keyword id="KW-0964">Secreted</keyword>
<keyword id="KW-0732">Signal</keyword>
<sequence length="323" mass="32367">MKSFTLTTLAALAGNAAAHATFQALWVDGVDYGAQCARLPASNSPVTDVTSNAIRCNANPSPARGKCPVKAGSTVTVEMHQQPGDRSCSSEAIGGAHYGPVMVYMSKVSDAASADGSSGWFKVFEDGWAKNPSGGSGDDDYWGTKDLNSCCGKMNVKIPADLPSGDYLLRAEALALHTAGSAGGAQFYMTCYQLTVTGSGSASPPTVSFPGAYKATDPGILVNIHAPLSGYTVPGPAVYSGGSTKKAGSACTGCESTCAVGSGPTATVSQSPGSTATSAPGGGGGCTVQKYQQCGGQGYTGCTNCASGSTCSAVSPPYYSQCV</sequence>
<evidence type="ECO:0000250" key="1">
    <source>
        <dbReference type="UniProtKB" id="Q1K8B6"/>
    </source>
</evidence>
<evidence type="ECO:0000250" key="2">
    <source>
        <dbReference type="UniProtKB" id="Q4WP32"/>
    </source>
</evidence>
<evidence type="ECO:0000255" key="3"/>
<evidence type="ECO:0000255" key="4">
    <source>
        <dbReference type="PROSITE-ProRule" id="PRU00597"/>
    </source>
</evidence>
<evidence type="ECO:0000269" key="5">
    <source>
    </source>
</evidence>
<evidence type="ECO:0000269" key="6">
    <source>
    </source>
</evidence>
<evidence type="ECO:0000269" key="7">
    <source>
    </source>
</evidence>
<evidence type="ECO:0000303" key="8">
    <source>
    </source>
</evidence>
<evidence type="ECO:0000305" key="9"/>
<evidence type="ECO:0000305" key="10">
    <source>
    </source>
</evidence>
<protein>
    <recommendedName>
        <fullName evidence="8">AA9 family lytic polysaccharide monooxygenase B</fullName>
        <shortName evidence="8">LPMO9B</shortName>
        <ecNumber evidence="5 6 7">1.14.99.56</ecNumber>
    </recommendedName>
    <alternativeName>
        <fullName evidence="9">Cellulase LPMO9A</fullName>
    </alternativeName>
    <alternativeName>
        <fullName evidence="9">Endo-beta-1,4-glucanase LPMO9B</fullName>
        <shortName evidence="9">Endoglucanase LPMO9B</shortName>
    </alternativeName>
    <alternativeName>
        <fullName evidence="9">Glycosyl hydrolase 61 family protein LPMO9B</fullName>
    </alternativeName>
</protein>
<gene>
    <name evidence="8" type="primary">LPMO9B</name>
    <name type="ORF">MYCTH_80312</name>
</gene>
<reference key="1">
    <citation type="journal article" date="2011" name="Nat. Biotechnol.">
        <title>Comparative genomic analysis of the thermophilic biomass-degrading fungi Myceliophthora thermophila and Thielavia terrestris.</title>
        <authorList>
            <person name="Berka R.M."/>
            <person name="Grigoriev I.V."/>
            <person name="Otillar R."/>
            <person name="Salamov A."/>
            <person name="Grimwood J."/>
            <person name="Reid I."/>
            <person name="Ishmael N."/>
            <person name="John T."/>
            <person name="Darmond C."/>
            <person name="Moisan M.-C."/>
            <person name="Henrissat B."/>
            <person name="Coutinho P.M."/>
            <person name="Lombard V."/>
            <person name="Natvig D.O."/>
            <person name="Lindquist E."/>
            <person name="Schmutz J."/>
            <person name="Lucas S."/>
            <person name="Harris P."/>
            <person name="Powlowski J."/>
            <person name="Bellemare A."/>
            <person name="Taylor D."/>
            <person name="Butler G."/>
            <person name="de Vries R.P."/>
            <person name="Allijn I.E."/>
            <person name="van den Brink J."/>
            <person name="Ushinsky S."/>
            <person name="Storms R."/>
            <person name="Powell A.J."/>
            <person name="Paulsen I.T."/>
            <person name="Elbourne L.D.H."/>
            <person name="Baker S.E."/>
            <person name="Magnuson J."/>
            <person name="LaBoissiere S."/>
            <person name="Clutterbuck A.J."/>
            <person name="Martinez D."/>
            <person name="Wogulis M."/>
            <person name="de Leon A.L."/>
            <person name="Rey M.W."/>
            <person name="Tsang A."/>
        </authorList>
    </citation>
    <scope>NUCLEOTIDE SEQUENCE [LARGE SCALE GENOMIC DNA]</scope>
    <source>
        <strain>ATCC 42464 / BCRC 31852 / DSM 1799</strain>
    </source>
</reference>
<reference key="2">
    <citation type="journal article" date="2016" name="Biotechnol. Biofuels">
        <title>Lytic polysaccharide monooxygenases from Myceliophthora thermophila C1 differ in substrate preference and reducing agent specificity.</title>
        <authorList>
            <person name="Frommhagen M."/>
            <person name="Koetsier M.J."/>
            <person name="Westphal A.H."/>
            <person name="Visser J."/>
            <person name="Hinz S.W."/>
            <person name="Vincken J.P."/>
            <person name="van Berkel W.J."/>
            <person name="Kabel M.A."/>
            <person name="Gruppen H."/>
        </authorList>
    </citation>
    <scope>FUNCTION</scope>
    <scope>CATALYTIC ACTIVITY</scope>
    <scope>ACTIVITY REGULATION</scope>
    <scope>BIOTECHNOLOGY</scope>
</reference>
<reference key="3">
    <citation type="journal article" date="2017" name="Biotechnol. Biofuels">
        <title>Boosting LPMO-driven lignocellulose degradation by polyphenol oxidase-activated lignin building blocks.</title>
        <authorList>
            <person name="Frommhagen M."/>
            <person name="Mutte S.K."/>
            <person name="Westphal A.H."/>
            <person name="Koetsier M.J."/>
            <person name="Hinz S.W.A."/>
            <person name="Visser J."/>
            <person name="Vincken J.P."/>
            <person name="Weijers D."/>
            <person name="van Berkel W.J.H."/>
            <person name="Gruppen H."/>
            <person name="Kabel M.A."/>
        </authorList>
    </citation>
    <scope>FUNCTION</scope>
    <scope>CATALYTIC ACTIVITY</scope>
</reference>
<reference key="4">
    <citation type="journal article" date="2018" name="Appl. Microbiol. Biotechnol.">
        <title>Quantification of the catalytic performance of C1-cellulose-specific lytic polysaccharide monooxygenases.</title>
        <authorList>
            <person name="Frommhagen M."/>
            <person name="Westphal A.H."/>
            <person name="Hilgers R."/>
            <person name="Koetsier M.J."/>
            <person name="Hinz S.W.A."/>
            <person name="Visser J."/>
            <person name="Gruppen H."/>
            <person name="van Berkel W.J.H."/>
            <person name="Kabel M.A."/>
        </authorList>
    </citation>
    <scope>FUNCTION</scope>
    <scope>CATALYTIC ACTIVITY</scope>
    <scope>BIOPHYSICOCHEMICAL PROPERTIES</scope>
</reference>
<organism>
    <name type="scientific">Thermothelomyces thermophilus (strain ATCC 42464 / BCRC 31852 / DSM 1799)</name>
    <name type="common">Sporotrichum thermophile</name>
    <dbReference type="NCBI Taxonomy" id="573729"/>
    <lineage>
        <taxon>Eukaryota</taxon>
        <taxon>Fungi</taxon>
        <taxon>Dikarya</taxon>
        <taxon>Ascomycota</taxon>
        <taxon>Pezizomycotina</taxon>
        <taxon>Sordariomycetes</taxon>
        <taxon>Sordariomycetidae</taxon>
        <taxon>Sordariales</taxon>
        <taxon>Chaetomiaceae</taxon>
        <taxon>Thermothelomyces</taxon>
    </lineage>
</organism>
<accession>G2QCJ3</accession>
<dbReference type="EC" id="1.14.99.56" evidence="5 6 7"/>
<dbReference type="EMBL" id="CP003004">
    <property type="protein sequence ID" value="AEO58169.1"/>
    <property type="molecule type" value="Genomic_DNA"/>
</dbReference>
<dbReference type="RefSeq" id="XP_003663414.1">
    <property type="nucleotide sequence ID" value="XM_003663366.1"/>
</dbReference>
<dbReference type="SMR" id="G2QCJ3"/>
<dbReference type="STRING" id="573729.G2QCJ3"/>
<dbReference type="GeneID" id="11509292"/>
<dbReference type="KEGG" id="mtm:MYCTH_80312"/>
<dbReference type="VEuPathDB" id="FungiDB:MYCTH_80312"/>
<dbReference type="eggNOG" id="ENOG502QRTW">
    <property type="taxonomic scope" value="Eukaryota"/>
</dbReference>
<dbReference type="HOGENOM" id="CLU_031730_0_1_1"/>
<dbReference type="InParanoid" id="G2QCJ3"/>
<dbReference type="OMA" id="YGSQCAR"/>
<dbReference type="OrthoDB" id="3238762at2759"/>
<dbReference type="Proteomes" id="UP000007322">
    <property type="component" value="Chromosome 3"/>
</dbReference>
<dbReference type="GO" id="GO:0005576">
    <property type="term" value="C:extracellular region"/>
    <property type="evidence" value="ECO:0007669"/>
    <property type="project" value="UniProtKB-SubCell"/>
</dbReference>
<dbReference type="GO" id="GO:0030248">
    <property type="term" value="F:cellulose binding"/>
    <property type="evidence" value="ECO:0007669"/>
    <property type="project" value="InterPro"/>
</dbReference>
<dbReference type="GO" id="GO:0046872">
    <property type="term" value="F:metal ion binding"/>
    <property type="evidence" value="ECO:0007669"/>
    <property type="project" value="UniProtKB-KW"/>
</dbReference>
<dbReference type="GO" id="GO:0004497">
    <property type="term" value="F:monooxygenase activity"/>
    <property type="evidence" value="ECO:0007669"/>
    <property type="project" value="UniProtKB-KW"/>
</dbReference>
<dbReference type="GO" id="GO:0030245">
    <property type="term" value="P:cellulose catabolic process"/>
    <property type="evidence" value="ECO:0007669"/>
    <property type="project" value="UniProtKB-KW"/>
</dbReference>
<dbReference type="CDD" id="cd21175">
    <property type="entry name" value="LPMO_AA9"/>
    <property type="match status" value="1"/>
</dbReference>
<dbReference type="Gene3D" id="2.70.50.70">
    <property type="match status" value="1"/>
</dbReference>
<dbReference type="InterPro" id="IPR049892">
    <property type="entry name" value="AA9"/>
</dbReference>
<dbReference type="InterPro" id="IPR005103">
    <property type="entry name" value="AA9_LPMO"/>
</dbReference>
<dbReference type="InterPro" id="IPR035971">
    <property type="entry name" value="CBD_sf"/>
</dbReference>
<dbReference type="InterPro" id="IPR000254">
    <property type="entry name" value="Cellulose-bd_dom_fun"/>
</dbReference>
<dbReference type="PANTHER" id="PTHR33353:SF9">
    <property type="entry name" value="ENDOGLUCANASE II"/>
    <property type="match status" value="1"/>
</dbReference>
<dbReference type="PANTHER" id="PTHR33353">
    <property type="entry name" value="PUTATIVE (AFU_ORTHOLOGUE AFUA_1G12560)-RELATED"/>
    <property type="match status" value="1"/>
</dbReference>
<dbReference type="Pfam" id="PF03443">
    <property type="entry name" value="AA9"/>
    <property type="match status" value="1"/>
</dbReference>
<dbReference type="Pfam" id="PF00734">
    <property type="entry name" value="CBM_1"/>
    <property type="match status" value="1"/>
</dbReference>
<dbReference type="SMART" id="SM00236">
    <property type="entry name" value="fCBD"/>
    <property type="match status" value="1"/>
</dbReference>
<dbReference type="SUPFAM" id="SSF57180">
    <property type="entry name" value="Cellulose-binding domain"/>
    <property type="match status" value="1"/>
</dbReference>
<dbReference type="PROSITE" id="PS51164">
    <property type="entry name" value="CBM1_2"/>
    <property type="match status" value="1"/>
</dbReference>